<keyword id="KW-1015">Disulfide bond</keyword>
<keyword id="KW-1199">Hemostasis impairing toxin</keyword>
<keyword id="KW-0964">Secreted</keyword>
<keyword id="KW-0732">Signal</keyword>
<keyword id="KW-0800">Toxin</keyword>
<name>SL2_ECHOC</name>
<sequence length="148" mass="16673">MGRFIFVSFGLLVVFLSLSGTEAGVCCPLGWSGYDQNCYKAFEELMNWADAEKFCTQQHKGSHLVSLHNIAEADFVVKKIVSVLKDGVIWMGLNDVWNECNWGWTDGAQLDYKAWNVESNCFIFKTAENHWSRTDCSGTHSFVCKSPA</sequence>
<accession>Q6X5S7</accession>
<organism>
    <name type="scientific">Echis ocellatus</name>
    <name type="common">Ocellated saw-scaled viper</name>
    <dbReference type="NCBI Taxonomy" id="99586"/>
    <lineage>
        <taxon>Eukaryota</taxon>
        <taxon>Metazoa</taxon>
        <taxon>Chordata</taxon>
        <taxon>Craniata</taxon>
        <taxon>Vertebrata</taxon>
        <taxon>Euteleostomi</taxon>
        <taxon>Lepidosauria</taxon>
        <taxon>Squamata</taxon>
        <taxon>Bifurcata</taxon>
        <taxon>Unidentata</taxon>
        <taxon>Episquamata</taxon>
        <taxon>Toxicofera</taxon>
        <taxon>Serpentes</taxon>
        <taxon>Colubroidea</taxon>
        <taxon>Viperidae</taxon>
        <taxon>Viperinae</taxon>
        <taxon>Echis</taxon>
    </lineage>
</organism>
<dbReference type="EMBL" id="AY254333">
    <property type="protein sequence ID" value="AAQ01214.1"/>
    <property type="molecule type" value="mRNA"/>
</dbReference>
<dbReference type="SMR" id="Q6X5S7"/>
<dbReference type="GO" id="GO:0005576">
    <property type="term" value="C:extracellular region"/>
    <property type="evidence" value="ECO:0007669"/>
    <property type="project" value="UniProtKB-SubCell"/>
</dbReference>
<dbReference type="GO" id="GO:0090729">
    <property type="term" value="F:toxin activity"/>
    <property type="evidence" value="ECO:0007669"/>
    <property type="project" value="UniProtKB-KW"/>
</dbReference>
<dbReference type="FunFam" id="3.10.100.10:FF:000087">
    <property type="entry name" value="Snaclec rhodocetin subunit delta"/>
    <property type="match status" value="1"/>
</dbReference>
<dbReference type="Gene3D" id="3.10.100.10">
    <property type="entry name" value="Mannose-Binding Protein A, subunit A"/>
    <property type="match status" value="1"/>
</dbReference>
<dbReference type="InterPro" id="IPR001304">
    <property type="entry name" value="C-type_lectin-like"/>
</dbReference>
<dbReference type="InterPro" id="IPR016186">
    <property type="entry name" value="C-type_lectin-like/link_sf"/>
</dbReference>
<dbReference type="InterPro" id="IPR050111">
    <property type="entry name" value="C-type_lectin/snaclec_domain"/>
</dbReference>
<dbReference type="InterPro" id="IPR018378">
    <property type="entry name" value="C-type_lectin_CS"/>
</dbReference>
<dbReference type="InterPro" id="IPR016187">
    <property type="entry name" value="CTDL_fold"/>
</dbReference>
<dbReference type="PANTHER" id="PTHR22803">
    <property type="entry name" value="MANNOSE, PHOSPHOLIPASE, LECTIN RECEPTOR RELATED"/>
    <property type="match status" value="1"/>
</dbReference>
<dbReference type="Pfam" id="PF00059">
    <property type="entry name" value="Lectin_C"/>
    <property type="match status" value="1"/>
</dbReference>
<dbReference type="PRINTS" id="PR01504">
    <property type="entry name" value="PNCREATITSAP"/>
</dbReference>
<dbReference type="SMART" id="SM00034">
    <property type="entry name" value="CLECT"/>
    <property type="match status" value="1"/>
</dbReference>
<dbReference type="SUPFAM" id="SSF56436">
    <property type="entry name" value="C-type lectin-like"/>
    <property type="match status" value="1"/>
</dbReference>
<dbReference type="PROSITE" id="PS00615">
    <property type="entry name" value="C_TYPE_LECTIN_1"/>
    <property type="match status" value="1"/>
</dbReference>
<dbReference type="PROSITE" id="PS50041">
    <property type="entry name" value="C_TYPE_LECTIN_2"/>
    <property type="match status" value="1"/>
</dbReference>
<reference key="1">
    <citation type="journal article" date="2003" name="Gene">
        <title>Novel sequences encoding venom C-type lectins are conserved in phylogenetically and geographically distinct Echis and Bitis viper species.</title>
        <authorList>
            <person name="Harrison R.A."/>
            <person name="Oliver J."/>
            <person name="Hasson S.S."/>
            <person name="Bharati K."/>
            <person name="Theakston R.D.G."/>
        </authorList>
    </citation>
    <scope>NUCLEOTIDE SEQUENCE [MRNA]</scope>
    <source>
        <tissue>Venom gland</tissue>
    </source>
</reference>
<evidence type="ECO:0000250" key="1"/>
<evidence type="ECO:0000255" key="2"/>
<evidence type="ECO:0000255" key="3">
    <source>
        <dbReference type="PROSITE-ProRule" id="PRU00040"/>
    </source>
</evidence>
<evidence type="ECO:0000305" key="4"/>
<comment type="function">
    <text evidence="1">Interferes with one step of hemostasis (modulation of platelet aggregation, or coagulation cascade, for example).</text>
</comment>
<comment type="subunit">
    <text evidence="1">Heterodimer; disulfide-linked.</text>
</comment>
<comment type="subcellular location">
    <subcellularLocation>
        <location evidence="1">Secreted</location>
    </subcellularLocation>
</comment>
<comment type="tissue specificity">
    <text>Expressed by the venom gland.</text>
</comment>
<comment type="miscellaneous">
    <text>Shows greater sequence similarity to the beta than alpha subunits compared to other heterodimer snaclecs.</text>
</comment>
<comment type="similarity">
    <text evidence="4">Belongs to the snaclec family.</text>
</comment>
<proteinExistence type="evidence at transcript level"/>
<protein>
    <recommendedName>
        <fullName>Snaclec 2</fullName>
    </recommendedName>
    <alternativeName>
        <fullName>C-type lectin 2</fullName>
        <shortName>CTL-2</shortName>
    </alternativeName>
</protein>
<feature type="signal peptide" evidence="2">
    <location>
        <begin position="1"/>
        <end position="23"/>
    </location>
</feature>
<feature type="chain" id="PRO_0000355272" description="Snaclec 2">
    <location>
        <begin position="24"/>
        <end position="148"/>
    </location>
</feature>
<feature type="domain" description="C-type lectin" evidence="3">
    <location>
        <begin position="34"/>
        <end position="145"/>
    </location>
</feature>
<feature type="disulfide bond" evidence="3">
    <location>
        <begin position="27"/>
        <end position="38"/>
    </location>
</feature>
<feature type="disulfide bond" evidence="3">
    <location>
        <begin position="55"/>
        <end position="144"/>
    </location>
</feature>
<feature type="disulfide bond" description="Interchain" evidence="3">
    <location>
        <position position="100"/>
    </location>
</feature>
<feature type="disulfide bond" evidence="3">
    <location>
        <begin position="121"/>
        <end position="136"/>
    </location>
</feature>